<reference key="1">
    <citation type="journal article" date="2004" name="J. Bacteriol.">
        <title>Comparative genomics of two Leptospira interrogans serovars reveals novel insights into physiology and pathogenesis.</title>
        <authorList>
            <person name="Nascimento A.L.T.O."/>
            <person name="Ko A.I."/>
            <person name="Martins E.A.L."/>
            <person name="Monteiro-Vitorello C.B."/>
            <person name="Ho P.L."/>
            <person name="Haake D.A."/>
            <person name="Verjovski-Almeida S."/>
            <person name="Hartskeerl R.A."/>
            <person name="Marques M.V."/>
            <person name="Oliveira M.C."/>
            <person name="Menck C.F.M."/>
            <person name="Leite L.C.C."/>
            <person name="Carrer H."/>
            <person name="Coutinho L.L."/>
            <person name="Degrave W.M."/>
            <person name="Dellagostin O.A."/>
            <person name="El-Dorry H."/>
            <person name="Ferro E.S."/>
            <person name="Ferro M.I.T."/>
            <person name="Furlan L.R."/>
            <person name="Gamberini M."/>
            <person name="Giglioti E.A."/>
            <person name="Goes-Neto A."/>
            <person name="Goldman G.H."/>
            <person name="Goldman M.H.S."/>
            <person name="Harakava R."/>
            <person name="Jeronimo S.M.B."/>
            <person name="Junqueira-de-Azevedo I.L.M."/>
            <person name="Kimura E.T."/>
            <person name="Kuramae E.E."/>
            <person name="Lemos E.G.M."/>
            <person name="Lemos M.V.F."/>
            <person name="Marino C.L."/>
            <person name="Nunes L.R."/>
            <person name="de Oliveira R.C."/>
            <person name="Pereira G.G."/>
            <person name="Reis M.S."/>
            <person name="Schriefer A."/>
            <person name="Siqueira W.J."/>
            <person name="Sommer P."/>
            <person name="Tsai S.M."/>
            <person name="Simpson A.J.G."/>
            <person name="Ferro J.A."/>
            <person name="Camargo L.E.A."/>
            <person name="Kitajima J.P."/>
            <person name="Setubal J.C."/>
            <person name="Van Sluys M.A."/>
        </authorList>
    </citation>
    <scope>NUCLEOTIDE SEQUENCE [LARGE SCALE GENOMIC DNA]</scope>
    <source>
        <strain>Fiocruz L1-130</strain>
    </source>
</reference>
<protein>
    <recommendedName>
        <fullName evidence="1">Phosphate acyltransferase</fullName>
        <ecNumber evidence="1">2.3.1.274</ecNumber>
    </recommendedName>
    <alternativeName>
        <fullName evidence="1">Acyl-ACP phosphotransacylase</fullName>
    </alternativeName>
    <alternativeName>
        <fullName evidence="1">Acyl-[acyl-carrier-protein]--phosphate acyltransferase</fullName>
    </alternativeName>
    <alternativeName>
        <fullName evidence="1">Phosphate-acyl-ACP acyltransferase</fullName>
    </alternativeName>
</protein>
<sequence>MMWVAVDVMSGDYGPEKIIEGAVNAVNQDGANVVLVGKEEEIGEILLKFEYDTNKVRIQHASEIIDMNDSPSIAVRTLQDSSIVQATQIVADKTCVGMFSPGNTGATMASALLYLGRIPGVLRPPIAAPIPQENGPPMLLVDAGANVDCKPDYLAQFAVMGEIYSKLIFNILNPKVGILSNGEEDKKGNTVSLKAFEMIKKLPINFVGNVEGRDLYGSGKDVDVVVCDGFIGNIVLKATEGLSKSIFNVLRESIKQSSLAQTGALLLKPTLGAIKKRLDYAEYGGALLLGVDGICLIGHGSSNALAVQSAIRVAVECAQHQINDRIAADLKKYNI</sequence>
<gene>
    <name evidence="1" type="primary">plsX</name>
    <name type="ordered locus">LIC_12443</name>
</gene>
<feature type="chain" id="PRO_0000189896" description="Phosphate acyltransferase">
    <location>
        <begin position="1"/>
        <end position="335"/>
    </location>
</feature>
<dbReference type="EC" id="2.3.1.274" evidence="1"/>
<dbReference type="EMBL" id="AE016823">
    <property type="protein sequence ID" value="AAS71010.1"/>
    <property type="molecule type" value="Genomic_DNA"/>
</dbReference>
<dbReference type="RefSeq" id="WP_000990052.1">
    <property type="nucleotide sequence ID" value="NC_005823.1"/>
</dbReference>
<dbReference type="SMR" id="Q72PM6"/>
<dbReference type="GeneID" id="61142319"/>
<dbReference type="KEGG" id="lic:LIC_12443"/>
<dbReference type="HOGENOM" id="CLU_039379_1_1_12"/>
<dbReference type="UniPathway" id="UPA00085"/>
<dbReference type="Proteomes" id="UP000007037">
    <property type="component" value="Chromosome I"/>
</dbReference>
<dbReference type="GO" id="GO:0005737">
    <property type="term" value="C:cytoplasm"/>
    <property type="evidence" value="ECO:0007669"/>
    <property type="project" value="UniProtKB-SubCell"/>
</dbReference>
<dbReference type="GO" id="GO:0043811">
    <property type="term" value="F:phosphate:acyl-[acyl carrier protein] acyltransferase activity"/>
    <property type="evidence" value="ECO:0007669"/>
    <property type="project" value="UniProtKB-UniRule"/>
</dbReference>
<dbReference type="GO" id="GO:0006633">
    <property type="term" value="P:fatty acid biosynthetic process"/>
    <property type="evidence" value="ECO:0007669"/>
    <property type="project" value="UniProtKB-UniRule"/>
</dbReference>
<dbReference type="GO" id="GO:0008654">
    <property type="term" value="P:phospholipid biosynthetic process"/>
    <property type="evidence" value="ECO:0007669"/>
    <property type="project" value="UniProtKB-KW"/>
</dbReference>
<dbReference type="Gene3D" id="3.40.718.10">
    <property type="entry name" value="Isopropylmalate Dehydrogenase"/>
    <property type="match status" value="1"/>
</dbReference>
<dbReference type="HAMAP" id="MF_00019">
    <property type="entry name" value="PlsX"/>
    <property type="match status" value="1"/>
</dbReference>
<dbReference type="InterPro" id="IPR003664">
    <property type="entry name" value="FA_synthesis"/>
</dbReference>
<dbReference type="InterPro" id="IPR012281">
    <property type="entry name" value="Phospholipid_synth_PlsX-like"/>
</dbReference>
<dbReference type="NCBIfam" id="TIGR00182">
    <property type="entry name" value="plsX"/>
    <property type="match status" value="1"/>
</dbReference>
<dbReference type="PANTHER" id="PTHR30100">
    <property type="entry name" value="FATTY ACID/PHOSPHOLIPID SYNTHESIS PROTEIN PLSX"/>
    <property type="match status" value="1"/>
</dbReference>
<dbReference type="PANTHER" id="PTHR30100:SF1">
    <property type="entry name" value="PHOSPHATE ACYLTRANSFERASE"/>
    <property type="match status" value="1"/>
</dbReference>
<dbReference type="Pfam" id="PF02504">
    <property type="entry name" value="FA_synthesis"/>
    <property type="match status" value="1"/>
</dbReference>
<dbReference type="PIRSF" id="PIRSF002465">
    <property type="entry name" value="Phsphlp_syn_PlsX"/>
    <property type="match status" value="1"/>
</dbReference>
<dbReference type="SUPFAM" id="SSF53659">
    <property type="entry name" value="Isocitrate/Isopropylmalate dehydrogenase-like"/>
    <property type="match status" value="1"/>
</dbReference>
<keyword id="KW-0963">Cytoplasm</keyword>
<keyword id="KW-0444">Lipid biosynthesis</keyword>
<keyword id="KW-0443">Lipid metabolism</keyword>
<keyword id="KW-0594">Phospholipid biosynthesis</keyword>
<keyword id="KW-1208">Phospholipid metabolism</keyword>
<keyword id="KW-0808">Transferase</keyword>
<accession>Q72PM6</accession>
<proteinExistence type="inferred from homology"/>
<comment type="function">
    <text evidence="1">Catalyzes the reversible formation of acyl-phosphate (acyl-PO(4)) from acyl-[acyl-carrier-protein] (acyl-ACP). This enzyme utilizes acyl-ACP as fatty acyl donor, but not acyl-CoA.</text>
</comment>
<comment type="catalytic activity">
    <reaction evidence="1">
        <text>a fatty acyl-[ACP] + phosphate = an acyl phosphate + holo-[ACP]</text>
        <dbReference type="Rhea" id="RHEA:42292"/>
        <dbReference type="Rhea" id="RHEA-COMP:9685"/>
        <dbReference type="Rhea" id="RHEA-COMP:14125"/>
        <dbReference type="ChEBI" id="CHEBI:43474"/>
        <dbReference type="ChEBI" id="CHEBI:59918"/>
        <dbReference type="ChEBI" id="CHEBI:64479"/>
        <dbReference type="ChEBI" id="CHEBI:138651"/>
        <dbReference type="EC" id="2.3.1.274"/>
    </reaction>
</comment>
<comment type="pathway">
    <text evidence="1">Lipid metabolism; phospholipid metabolism.</text>
</comment>
<comment type="subunit">
    <text evidence="1">Homodimer. Probably interacts with PlsY.</text>
</comment>
<comment type="subcellular location">
    <subcellularLocation>
        <location evidence="1">Cytoplasm</location>
    </subcellularLocation>
    <text evidence="1">Associated with the membrane possibly through PlsY.</text>
</comment>
<comment type="similarity">
    <text evidence="1">Belongs to the PlsX family.</text>
</comment>
<evidence type="ECO:0000255" key="1">
    <source>
        <dbReference type="HAMAP-Rule" id="MF_00019"/>
    </source>
</evidence>
<name>PLSX_LEPIC</name>
<organism>
    <name type="scientific">Leptospira interrogans serogroup Icterohaemorrhagiae serovar copenhageni (strain Fiocruz L1-130)</name>
    <dbReference type="NCBI Taxonomy" id="267671"/>
    <lineage>
        <taxon>Bacteria</taxon>
        <taxon>Pseudomonadati</taxon>
        <taxon>Spirochaetota</taxon>
        <taxon>Spirochaetia</taxon>
        <taxon>Leptospirales</taxon>
        <taxon>Leptospiraceae</taxon>
        <taxon>Leptospira</taxon>
    </lineage>
</organism>